<accession>Q7L5Y6</accession>
<accession>B3KNN6</accession>
<accession>Q2VPC0</accession>
<accession>Q9NWD5</accession>
<comment type="function">
    <text evidence="1">Component of the E3 ubiquitin ligase DCX DET1-COP1 complex, which is required for ubiquitination and subsequent degradation of target proteins. The complex is involved in JUN ubiquitination and degradation.</text>
</comment>
<comment type="subunit">
    <text evidence="1">Component of the DCX DET1-COP1 ubiquitin ligase complex at least composed of RBX1, DET1, DDB1, CUL4A and COP1.</text>
</comment>
<comment type="subcellular location">
    <subcellularLocation>
        <location evidence="3">Nucleus</location>
    </subcellularLocation>
</comment>
<comment type="alternative products">
    <event type="alternative splicing"/>
    <isoform>
        <id>Q7L5Y6-1</id>
        <name>1</name>
        <sequence type="displayed"/>
    </isoform>
    <isoform>
        <id>Q7L5Y6-2</id>
        <name>2</name>
        <sequence type="described" ref="VSP_043012"/>
    </isoform>
</comment>
<comment type="tissue specificity">
    <text evidence="1">Highly expressed in the ovary, some lymphoid organs and resting leukocytes.</text>
</comment>
<comment type="similarity">
    <text evidence="3">Belongs to the DET1 family.</text>
</comment>
<comment type="sequence caution" evidence="3">
    <conflict type="erroneous initiation">
        <sequence resource="EMBL-CDS" id="BAA91447"/>
    </conflict>
</comment>
<name>DET1_HUMAN</name>
<organism>
    <name type="scientific">Homo sapiens</name>
    <name type="common">Human</name>
    <dbReference type="NCBI Taxonomy" id="9606"/>
    <lineage>
        <taxon>Eukaryota</taxon>
        <taxon>Metazoa</taxon>
        <taxon>Chordata</taxon>
        <taxon>Craniata</taxon>
        <taxon>Vertebrata</taxon>
        <taxon>Euteleostomi</taxon>
        <taxon>Mammalia</taxon>
        <taxon>Eutheria</taxon>
        <taxon>Euarchontoglires</taxon>
        <taxon>Primates</taxon>
        <taxon>Haplorrhini</taxon>
        <taxon>Catarrhini</taxon>
        <taxon>Hominidae</taxon>
        <taxon>Homo</taxon>
    </lineage>
</organism>
<keyword id="KW-0002">3D-structure</keyword>
<keyword id="KW-0025">Alternative splicing</keyword>
<keyword id="KW-0539">Nucleus</keyword>
<keyword id="KW-1267">Proteomics identification</keyword>
<keyword id="KW-1185">Reference proteome</keyword>
<keyword id="KW-0833">Ubl conjugation pathway</keyword>
<dbReference type="EMBL" id="AK000965">
    <property type="protein sequence ID" value="BAA91447.1"/>
    <property type="status" value="ALT_INIT"/>
    <property type="molecule type" value="mRNA"/>
</dbReference>
<dbReference type="EMBL" id="AK054603">
    <property type="protein sequence ID" value="BAG51398.1"/>
    <property type="molecule type" value="mRNA"/>
</dbReference>
<dbReference type="EMBL" id="BC001242">
    <property type="protein sequence ID" value="AAH01242.2"/>
    <property type="molecule type" value="mRNA"/>
</dbReference>
<dbReference type="EMBL" id="BC109060">
    <property type="protein sequence ID" value="AAI09061.1"/>
    <property type="molecule type" value="mRNA"/>
</dbReference>
<dbReference type="EMBL" id="BC109061">
    <property type="protein sequence ID" value="AAI09062.1"/>
    <property type="molecule type" value="mRNA"/>
</dbReference>
<dbReference type="CCDS" id="CCDS45343.1">
    <molecule id="Q7L5Y6-2"/>
</dbReference>
<dbReference type="CCDS" id="CCDS45344.1">
    <molecule id="Q7L5Y6-1"/>
</dbReference>
<dbReference type="RefSeq" id="NP_001137546.1">
    <molecule id="Q7L5Y6-1"/>
    <property type="nucleotide sequence ID" value="NM_001144074.3"/>
</dbReference>
<dbReference type="RefSeq" id="NP_001308525.1">
    <molecule id="Q7L5Y6-1"/>
    <property type="nucleotide sequence ID" value="NM_001321596.1"/>
</dbReference>
<dbReference type="RefSeq" id="NP_060466.2">
    <molecule id="Q7L5Y6-2"/>
    <property type="nucleotide sequence ID" value="NM_017996.4"/>
</dbReference>
<dbReference type="PDB" id="9DHD">
    <property type="method" value="EM"/>
    <property type="resolution" value="2.90 A"/>
    <property type="chains" value="B=12-550"/>
</dbReference>
<dbReference type="PDBsum" id="9DHD"/>
<dbReference type="EMDB" id="EMD-44638"/>
<dbReference type="EMDB" id="EMD-46867"/>
<dbReference type="SMR" id="Q7L5Y6"/>
<dbReference type="BioGRID" id="120387">
    <property type="interactions" value="157"/>
</dbReference>
<dbReference type="CORUM" id="Q7L5Y6"/>
<dbReference type="FunCoup" id="Q7L5Y6">
    <property type="interactions" value="601"/>
</dbReference>
<dbReference type="IntAct" id="Q7L5Y6">
    <property type="interactions" value="48"/>
</dbReference>
<dbReference type="STRING" id="9606.ENSP00000456340"/>
<dbReference type="GlyGen" id="Q7L5Y6">
    <property type="glycosylation" value="1 site, 1 O-linked glycan (1 site)"/>
</dbReference>
<dbReference type="iPTMnet" id="Q7L5Y6"/>
<dbReference type="PhosphoSitePlus" id="Q7L5Y6"/>
<dbReference type="BioMuta" id="DET1"/>
<dbReference type="DMDM" id="55976471"/>
<dbReference type="jPOST" id="Q7L5Y6"/>
<dbReference type="MassIVE" id="Q7L5Y6"/>
<dbReference type="PaxDb" id="9606-ENSP00000456340"/>
<dbReference type="PeptideAtlas" id="Q7L5Y6"/>
<dbReference type="ProteomicsDB" id="68817">
    <molecule id="Q7L5Y6-1"/>
</dbReference>
<dbReference type="ProteomicsDB" id="68818">
    <molecule id="Q7L5Y6-2"/>
</dbReference>
<dbReference type="Pumba" id="Q7L5Y6"/>
<dbReference type="Antibodypedia" id="43705">
    <property type="antibodies" value="68 antibodies from 15 providers"/>
</dbReference>
<dbReference type="DNASU" id="55070"/>
<dbReference type="Ensembl" id="ENST00000268148.13">
    <molecule id="Q7L5Y6-1"/>
    <property type="protein sequence ID" value="ENSP00000268148.8"/>
    <property type="gene ID" value="ENSG00000140543.15"/>
</dbReference>
<dbReference type="Ensembl" id="ENST00000444300.1">
    <molecule id="Q7L5Y6-2"/>
    <property type="protein sequence ID" value="ENSP00000408994.1"/>
    <property type="gene ID" value="ENSG00000140543.15"/>
</dbReference>
<dbReference type="Ensembl" id="ENST00000564406.5">
    <molecule id="Q7L5Y6-2"/>
    <property type="protein sequence ID" value="ENSP00000456340.1"/>
    <property type="gene ID" value="ENSG00000140543.15"/>
</dbReference>
<dbReference type="GeneID" id="55070"/>
<dbReference type="KEGG" id="hsa:55070"/>
<dbReference type="MANE-Select" id="ENST00000268148.13">
    <property type="protein sequence ID" value="ENSP00000268148.8"/>
    <property type="RefSeq nucleotide sequence ID" value="NM_001144074.3"/>
    <property type="RefSeq protein sequence ID" value="NP_001137546.1"/>
</dbReference>
<dbReference type="UCSC" id="uc002bmq.3">
    <molecule id="Q7L5Y6-1"/>
    <property type="organism name" value="human"/>
</dbReference>
<dbReference type="AGR" id="HGNC:25477"/>
<dbReference type="CTD" id="55070"/>
<dbReference type="DisGeNET" id="55070"/>
<dbReference type="GeneCards" id="DET1"/>
<dbReference type="HGNC" id="HGNC:25477">
    <property type="gene designation" value="DET1"/>
</dbReference>
<dbReference type="HPA" id="ENSG00000140543">
    <property type="expression patterns" value="Low tissue specificity"/>
</dbReference>
<dbReference type="MIM" id="608727">
    <property type="type" value="gene"/>
</dbReference>
<dbReference type="neXtProt" id="NX_Q7L5Y6"/>
<dbReference type="OpenTargets" id="ENSG00000140543"/>
<dbReference type="PharmGKB" id="PA134943899"/>
<dbReference type="VEuPathDB" id="HostDB:ENSG00000140543"/>
<dbReference type="eggNOG" id="KOG2558">
    <property type="taxonomic scope" value="Eukaryota"/>
</dbReference>
<dbReference type="GeneTree" id="ENSGT00390000005224"/>
<dbReference type="HOGENOM" id="CLU_036725_1_0_1"/>
<dbReference type="InParanoid" id="Q7L5Y6"/>
<dbReference type="OrthoDB" id="18339at2759"/>
<dbReference type="PAN-GO" id="Q7L5Y6">
    <property type="GO annotations" value="6 GO annotations based on evolutionary models"/>
</dbReference>
<dbReference type="PhylomeDB" id="Q7L5Y6"/>
<dbReference type="TreeFam" id="TF324729"/>
<dbReference type="PathwayCommons" id="Q7L5Y6"/>
<dbReference type="Reactome" id="R-HSA-983168">
    <property type="pathway name" value="Antigen processing: Ubiquitination &amp; Proteasome degradation"/>
</dbReference>
<dbReference type="SignaLink" id="Q7L5Y6"/>
<dbReference type="SIGNOR" id="Q7L5Y6"/>
<dbReference type="BioGRID-ORCS" id="55070">
    <property type="hits" value="184 hits in 1177 CRISPR screens"/>
</dbReference>
<dbReference type="ChiTaRS" id="DET1">
    <property type="organism name" value="human"/>
</dbReference>
<dbReference type="GenomeRNAi" id="55070"/>
<dbReference type="Pharos" id="Q7L5Y6">
    <property type="development level" value="Tbio"/>
</dbReference>
<dbReference type="PRO" id="PR:Q7L5Y6"/>
<dbReference type="Proteomes" id="UP000005640">
    <property type="component" value="Chromosome 15"/>
</dbReference>
<dbReference type="RNAct" id="Q7L5Y6">
    <property type="molecule type" value="protein"/>
</dbReference>
<dbReference type="Bgee" id="ENSG00000140543">
    <property type="expression patterns" value="Expressed in hindlimb stylopod muscle and 108 other cell types or tissues"/>
</dbReference>
<dbReference type="ExpressionAtlas" id="Q7L5Y6">
    <property type="expression patterns" value="baseline and differential"/>
</dbReference>
<dbReference type="GO" id="GO:0080008">
    <property type="term" value="C:Cul4-RING E3 ubiquitin ligase complex"/>
    <property type="evidence" value="ECO:0000314"/>
    <property type="project" value="UniProtKB"/>
</dbReference>
<dbReference type="GO" id="GO:0031464">
    <property type="term" value="C:Cul4A-RING E3 ubiquitin ligase complex"/>
    <property type="evidence" value="ECO:0000314"/>
    <property type="project" value="UniProtKB"/>
</dbReference>
<dbReference type="GO" id="GO:0031461">
    <property type="term" value="C:cullin-RING ubiquitin ligase complex"/>
    <property type="evidence" value="ECO:0000318"/>
    <property type="project" value="GO_Central"/>
</dbReference>
<dbReference type="GO" id="GO:0005634">
    <property type="term" value="C:nucleus"/>
    <property type="evidence" value="ECO:0000318"/>
    <property type="project" value="GO_Central"/>
</dbReference>
<dbReference type="GO" id="GO:0044877">
    <property type="term" value="F:protein-containing complex binding"/>
    <property type="evidence" value="ECO:0000314"/>
    <property type="project" value="UniProtKB"/>
</dbReference>
<dbReference type="GO" id="GO:0031625">
    <property type="term" value="F:ubiquitin protein ligase binding"/>
    <property type="evidence" value="ECO:0000315"/>
    <property type="project" value="UniProtKB"/>
</dbReference>
<dbReference type="GO" id="GO:1990756">
    <property type="term" value="F:ubiquitin-like ligase-substrate adaptor activity"/>
    <property type="evidence" value="ECO:0000353"/>
    <property type="project" value="UniProtKB"/>
</dbReference>
<dbReference type="GO" id="GO:0032436">
    <property type="term" value="P:positive regulation of proteasomal ubiquitin-dependent protein catabolic process"/>
    <property type="evidence" value="ECO:0000353"/>
    <property type="project" value="UniProtKB"/>
</dbReference>
<dbReference type="GO" id="GO:0016567">
    <property type="term" value="P:protein ubiquitination"/>
    <property type="evidence" value="ECO:0000353"/>
    <property type="project" value="UniProtKB"/>
</dbReference>
<dbReference type="GO" id="GO:0065003">
    <property type="term" value="P:protein-containing complex assembly"/>
    <property type="evidence" value="ECO:0000314"/>
    <property type="project" value="UniProtKB"/>
</dbReference>
<dbReference type="InterPro" id="IPR019138">
    <property type="entry name" value="De-etiolated_protein_1_Det1"/>
</dbReference>
<dbReference type="PANTHER" id="PTHR13374:SF3">
    <property type="entry name" value="DET1 HOMOLOG"/>
    <property type="match status" value="1"/>
</dbReference>
<dbReference type="PANTHER" id="PTHR13374">
    <property type="entry name" value="DET1 HOMOLOG DE-ETIOLATED-1 HOMOLOG"/>
    <property type="match status" value="1"/>
</dbReference>
<dbReference type="Pfam" id="PF09737">
    <property type="entry name" value="Det1"/>
    <property type="match status" value="1"/>
</dbReference>
<evidence type="ECO:0000269" key="1">
    <source>
    </source>
</evidence>
<evidence type="ECO:0000303" key="2">
    <source>
    </source>
</evidence>
<evidence type="ECO:0000305" key="3"/>
<proteinExistence type="evidence at protein level"/>
<gene>
    <name type="primary">DET1</name>
</gene>
<reference key="1">
    <citation type="journal article" date="2004" name="Nat. Genet.">
        <title>Complete sequencing and characterization of 21,243 full-length human cDNAs.</title>
        <authorList>
            <person name="Ota T."/>
            <person name="Suzuki Y."/>
            <person name="Nishikawa T."/>
            <person name="Otsuki T."/>
            <person name="Sugiyama T."/>
            <person name="Irie R."/>
            <person name="Wakamatsu A."/>
            <person name="Hayashi K."/>
            <person name="Sato H."/>
            <person name="Nagai K."/>
            <person name="Kimura K."/>
            <person name="Makita H."/>
            <person name="Sekine M."/>
            <person name="Obayashi M."/>
            <person name="Nishi T."/>
            <person name="Shibahara T."/>
            <person name="Tanaka T."/>
            <person name="Ishii S."/>
            <person name="Yamamoto J."/>
            <person name="Saito K."/>
            <person name="Kawai Y."/>
            <person name="Isono Y."/>
            <person name="Nakamura Y."/>
            <person name="Nagahari K."/>
            <person name="Murakami K."/>
            <person name="Yasuda T."/>
            <person name="Iwayanagi T."/>
            <person name="Wagatsuma M."/>
            <person name="Shiratori A."/>
            <person name="Sudo H."/>
            <person name="Hosoiri T."/>
            <person name="Kaku Y."/>
            <person name="Kodaira H."/>
            <person name="Kondo H."/>
            <person name="Sugawara M."/>
            <person name="Takahashi M."/>
            <person name="Kanda K."/>
            <person name="Yokoi T."/>
            <person name="Furuya T."/>
            <person name="Kikkawa E."/>
            <person name="Omura Y."/>
            <person name="Abe K."/>
            <person name="Kamihara K."/>
            <person name="Katsuta N."/>
            <person name="Sato K."/>
            <person name="Tanikawa M."/>
            <person name="Yamazaki M."/>
            <person name="Ninomiya K."/>
            <person name="Ishibashi T."/>
            <person name="Yamashita H."/>
            <person name="Murakawa K."/>
            <person name="Fujimori K."/>
            <person name="Tanai H."/>
            <person name="Kimata M."/>
            <person name="Watanabe M."/>
            <person name="Hiraoka S."/>
            <person name="Chiba Y."/>
            <person name="Ishida S."/>
            <person name="Ono Y."/>
            <person name="Takiguchi S."/>
            <person name="Watanabe S."/>
            <person name="Yosida M."/>
            <person name="Hotuta T."/>
            <person name="Kusano J."/>
            <person name="Kanehori K."/>
            <person name="Takahashi-Fujii A."/>
            <person name="Hara H."/>
            <person name="Tanase T.-O."/>
            <person name="Nomura Y."/>
            <person name="Togiya S."/>
            <person name="Komai F."/>
            <person name="Hara R."/>
            <person name="Takeuchi K."/>
            <person name="Arita M."/>
            <person name="Imose N."/>
            <person name="Musashino K."/>
            <person name="Yuuki H."/>
            <person name="Oshima A."/>
            <person name="Sasaki N."/>
            <person name="Aotsuka S."/>
            <person name="Yoshikawa Y."/>
            <person name="Matsunawa H."/>
            <person name="Ichihara T."/>
            <person name="Shiohata N."/>
            <person name="Sano S."/>
            <person name="Moriya S."/>
            <person name="Momiyama H."/>
            <person name="Satoh N."/>
            <person name="Takami S."/>
            <person name="Terashima Y."/>
            <person name="Suzuki O."/>
            <person name="Nakagawa S."/>
            <person name="Senoh A."/>
            <person name="Mizoguchi H."/>
            <person name="Goto Y."/>
            <person name="Shimizu F."/>
            <person name="Wakebe H."/>
            <person name="Hishigaki H."/>
            <person name="Watanabe T."/>
            <person name="Sugiyama A."/>
            <person name="Takemoto M."/>
            <person name="Kawakami B."/>
            <person name="Yamazaki M."/>
            <person name="Watanabe K."/>
            <person name="Kumagai A."/>
            <person name="Itakura S."/>
            <person name="Fukuzumi Y."/>
            <person name="Fujimori Y."/>
            <person name="Komiyama M."/>
            <person name="Tashiro H."/>
            <person name="Tanigami A."/>
            <person name="Fujiwara T."/>
            <person name="Ono T."/>
            <person name="Yamada K."/>
            <person name="Fujii Y."/>
            <person name="Ozaki K."/>
            <person name="Hirao M."/>
            <person name="Ohmori Y."/>
            <person name="Kawabata A."/>
            <person name="Hikiji T."/>
            <person name="Kobatake N."/>
            <person name="Inagaki H."/>
            <person name="Ikema Y."/>
            <person name="Okamoto S."/>
            <person name="Okitani R."/>
            <person name="Kawakami T."/>
            <person name="Noguchi S."/>
            <person name="Itoh T."/>
            <person name="Shigeta K."/>
            <person name="Senba T."/>
            <person name="Matsumura K."/>
            <person name="Nakajima Y."/>
            <person name="Mizuno T."/>
            <person name="Morinaga M."/>
            <person name="Sasaki M."/>
            <person name="Togashi T."/>
            <person name="Oyama M."/>
            <person name="Hata H."/>
            <person name="Watanabe M."/>
            <person name="Komatsu T."/>
            <person name="Mizushima-Sugano J."/>
            <person name="Satoh T."/>
            <person name="Shirai Y."/>
            <person name="Takahashi Y."/>
            <person name="Nakagawa K."/>
            <person name="Okumura K."/>
            <person name="Nagase T."/>
            <person name="Nomura N."/>
            <person name="Kikuchi H."/>
            <person name="Masuho Y."/>
            <person name="Yamashita R."/>
            <person name="Nakai K."/>
            <person name="Yada T."/>
            <person name="Nakamura Y."/>
            <person name="Ohara O."/>
            <person name="Isogai T."/>
            <person name="Sugano S."/>
        </authorList>
    </citation>
    <scope>NUCLEOTIDE SEQUENCE [LARGE SCALE MRNA] (ISOFORM 2)</scope>
    <source>
        <tissue>Embryo</tissue>
        <tissue>Neuroblastoma</tissue>
    </source>
</reference>
<reference key="2">
    <citation type="journal article" date="2004" name="Genome Res.">
        <title>The status, quality, and expansion of the NIH full-length cDNA project: the Mammalian Gene Collection (MGC).</title>
        <authorList>
            <consortium name="The MGC Project Team"/>
        </authorList>
    </citation>
    <scope>NUCLEOTIDE SEQUENCE [LARGE SCALE MRNA] (ISOFORM 1)</scope>
    <source>
        <tissue>Placenta</tissue>
    </source>
</reference>
<reference key="3">
    <citation type="journal article" date="2004" name="Science">
        <title>Human De-etiolated-1 regulates c-Jun by assembling a CUL4A ubiquitin ligase.</title>
        <authorList>
            <person name="Wertz I.E."/>
            <person name="O'Rourke K.M."/>
            <person name="Zhang Z."/>
            <person name="Dornan D."/>
            <person name="Arnott D."/>
            <person name="Deshaies R.J."/>
            <person name="Dixit V.M."/>
        </authorList>
    </citation>
    <scope>FUNCTION</scope>
    <scope>TISSUE SPECIFICITY</scope>
    <scope>IDENTIFICATION IN THE DCX DET1-COP1 COMPLEX WITH RBX1; CUL4A; COP1 AND DDB1</scope>
</reference>
<sequence length="550" mass="63848">MDHHVSTIKPRRIQNQNVIHRLERRRISSGKAGTHWHQVRVFHQNVFPNFTVVNVEKPPCFLRKFSPDGRYFIAFSSDQTSLEIYEYQGCQAAEDLLQGYEGEILSNGNDQRSVNIRGRLFERFFVLLHITNVAANGEHLNRECSLFTDDCRCVIVGSAAYLPDEPHPPFFEVYRNSESVTPNPRSPLEDYSLHIIDLHTGRLCDTRTFKCDKVVLSHNQGLYLYKNILAILSVQQQTIHVFQVTPEGTFIDVRTIGRFCYEDDLLTVSAVFPEVQRDSQTGMANPFRDPFINSLKHRLLVYLWRRAEQDGSAMAKRRFFQYFDQLRQLRMWKMQLLDENHLFIKYTSEDVVTLRVTDPSQASFFVVYNMVTTEVIAVFENTSDELLELFENFCDLFRNATLHSEVQFPCSASSNNFARQIQRRFKDTIINAKYGGHTEAVRRLLGQLPISAQSYSGSPYLDLSLFSYDDKWVSVMERPKTCGDHPIRFYARDSGLLKFEIQAGLLGRPINHTVRRLVAFTFHPFEPFAISVQRTNAEYVVNFHMRHCCT</sequence>
<feature type="chain" id="PRO_0000129026" description="DET1 homolog">
    <location>
        <begin position="1"/>
        <end position="550"/>
    </location>
</feature>
<feature type="splice variant" id="VSP_043012" description="In isoform 2." evidence="2">
    <original>M</original>
    <variation>MVGQILKRDVIM</variation>
    <location>
        <position position="1"/>
    </location>
</feature>
<protein>
    <recommendedName>
        <fullName>DET1 homolog</fullName>
    </recommendedName>
    <alternativeName>
        <fullName>De-etiolated-1 homolog</fullName>
    </alternativeName>
</protein>